<dbReference type="EMBL" id="CP017623">
    <property type="protein sequence ID" value="AOW26571.1"/>
    <property type="molecule type" value="Genomic_DNA"/>
</dbReference>
<dbReference type="RefSeq" id="XP_723485.2">
    <property type="nucleotide sequence ID" value="XM_718392.2"/>
</dbReference>
<dbReference type="SMR" id="Q5APG6"/>
<dbReference type="FunCoup" id="Q5APG6">
    <property type="interactions" value="133"/>
</dbReference>
<dbReference type="STRING" id="237561.Q5APG6"/>
<dbReference type="EnsemblFungi" id="C1_09370W_A-T">
    <property type="protein sequence ID" value="C1_09370W_A-T-p1"/>
    <property type="gene ID" value="C1_09370W_A"/>
</dbReference>
<dbReference type="GeneID" id="3634808"/>
<dbReference type="KEGG" id="cal:CAALFM_C109370WA"/>
<dbReference type="CGD" id="CAL0000201853">
    <property type="gene designation" value="CEF1"/>
</dbReference>
<dbReference type="VEuPathDB" id="FungiDB:C1_09370W_A"/>
<dbReference type="eggNOG" id="KOG0050">
    <property type="taxonomic scope" value="Eukaryota"/>
</dbReference>
<dbReference type="HOGENOM" id="CLU_009082_2_0_1"/>
<dbReference type="InParanoid" id="Q5APG6"/>
<dbReference type="OMA" id="KQVKARW"/>
<dbReference type="OrthoDB" id="1410009at2759"/>
<dbReference type="PRO" id="PR:Q5APG6"/>
<dbReference type="Proteomes" id="UP000000559">
    <property type="component" value="Chromosome 1"/>
</dbReference>
<dbReference type="GO" id="GO:0005829">
    <property type="term" value="C:cytosol"/>
    <property type="evidence" value="ECO:0007669"/>
    <property type="project" value="EnsemblFungi"/>
</dbReference>
<dbReference type="GO" id="GO:0140602">
    <property type="term" value="C:nucleolar peripheral inclusion body"/>
    <property type="evidence" value="ECO:0007669"/>
    <property type="project" value="EnsemblFungi"/>
</dbReference>
<dbReference type="GO" id="GO:0071014">
    <property type="term" value="C:post-mRNA release spliceosomal complex"/>
    <property type="evidence" value="ECO:0007669"/>
    <property type="project" value="EnsemblFungi"/>
</dbReference>
<dbReference type="GO" id="GO:0000974">
    <property type="term" value="C:Prp19 complex"/>
    <property type="evidence" value="ECO:0000318"/>
    <property type="project" value="GO_Central"/>
</dbReference>
<dbReference type="GO" id="GO:0005681">
    <property type="term" value="C:spliceosomal complex"/>
    <property type="evidence" value="ECO:0000318"/>
    <property type="project" value="GO_Central"/>
</dbReference>
<dbReference type="GO" id="GO:0003677">
    <property type="term" value="F:DNA binding"/>
    <property type="evidence" value="ECO:0007669"/>
    <property type="project" value="UniProtKB-KW"/>
</dbReference>
<dbReference type="GO" id="GO:0044180">
    <property type="term" value="P:filamentous growth of a unicellular organism"/>
    <property type="evidence" value="ECO:0000315"/>
    <property type="project" value="CGD"/>
</dbReference>
<dbReference type="GO" id="GO:0045292">
    <property type="term" value="P:mRNA cis splicing, via spliceosome"/>
    <property type="evidence" value="ECO:0007669"/>
    <property type="project" value="EnsemblFungi"/>
</dbReference>
<dbReference type="GO" id="GO:0000398">
    <property type="term" value="P:mRNA splicing, via spliceosome"/>
    <property type="evidence" value="ECO:0000318"/>
    <property type="project" value="GO_Central"/>
</dbReference>
<dbReference type="CDD" id="cd00167">
    <property type="entry name" value="SANT"/>
    <property type="match status" value="1"/>
</dbReference>
<dbReference type="CDD" id="cd11659">
    <property type="entry name" value="SANT_CDC5_II"/>
    <property type="match status" value="1"/>
</dbReference>
<dbReference type="Gene3D" id="1.10.10.60">
    <property type="entry name" value="Homeodomain-like"/>
    <property type="match status" value="2"/>
</dbReference>
<dbReference type="InterPro" id="IPR047242">
    <property type="entry name" value="CDC5L/Cef1"/>
</dbReference>
<dbReference type="InterPro" id="IPR009057">
    <property type="entry name" value="Homeodomain-like_sf"/>
</dbReference>
<dbReference type="InterPro" id="IPR017930">
    <property type="entry name" value="Myb_dom"/>
</dbReference>
<dbReference type="InterPro" id="IPR001005">
    <property type="entry name" value="SANT/Myb"/>
</dbReference>
<dbReference type="InterPro" id="IPR047240">
    <property type="entry name" value="SANT_CDC5L_II"/>
</dbReference>
<dbReference type="PANTHER" id="PTHR45885">
    <property type="entry name" value="CELL DIVISION CYCLE 5-LIKE PROTEIN"/>
    <property type="match status" value="1"/>
</dbReference>
<dbReference type="PANTHER" id="PTHR45885:SF1">
    <property type="entry name" value="CELL DIVISION CYCLE 5-LIKE PROTEIN"/>
    <property type="match status" value="1"/>
</dbReference>
<dbReference type="Pfam" id="PF00249">
    <property type="entry name" value="Myb_DNA-binding"/>
    <property type="match status" value="2"/>
</dbReference>
<dbReference type="SMART" id="SM00717">
    <property type="entry name" value="SANT"/>
    <property type="match status" value="2"/>
</dbReference>
<dbReference type="SUPFAM" id="SSF46689">
    <property type="entry name" value="Homeodomain-like"/>
    <property type="match status" value="1"/>
</dbReference>
<dbReference type="PROSITE" id="PS51294">
    <property type="entry name" value="HTH_MYB"/>
    <property type="match status" value="2"/>
</dbReference>
<comment type="function">
    <text evidence="1">Involved in pre-mRNA splicing and cell cycle control.</text>
</comment>
<comment type="subunit">
    <text evidence="1">Associated with the spliceosome.</text>
</comment>
<comment type="subcellular location">
    <subcellularLocation>
        <location evidence="1">Cytoplasm</location>
    </subcellularLocation>
    <subcellularLocation>
        <location evidence="3">Nucleus</location>
    </subcellularLocation>
</comment>
<comment type="similarity">
    <text evidence="5">Belongs to the CEF1 family.</text>
</comment>
<evidence type="ECO:0000250" key="1"/>
<evidence type="ECO:0000255" key="2"/>
<evidence type="ECO:0000255" key="3">
    <source>
        <dbReference type="PROSITE-ProRule" id="PRU00625"/>
    </source>
</evidence>
<evidence type="ECO:0000256" key="4">
    <source>
        <dbReference type="SAM" id="MobiDB-lite"/>
    </source>
</evidence>
<evidence type="ECO:0000305" key="5"/>
<keyword id="KW-0175">Coiled coil</keyword>
<keyword id="KW-0963">Cytoplasm</keyword>
<keyword id="KW-0238">DNA-binding</keyword>
<keyword id="KW-0507">mRNA processing</keyword>
<keyword id="KW-0508">mRNA splicing</keyword>
<keyword id="KW-0539">Nucleus</keyword>
<keyword id="KW-1185">Reference proteome</keyword>
<keyword id="KW-0677">Repeat</keyword>
<keyword id="KW-0747">Spliceosome</keyword>
<proteinExistence type="inferred from homology"/>
<protein>
    <recommendedName>
        <fullName>Pre-mRNA-splicing factor CEF1</fullName>
    </recommendedName>
</protein>
<feature type="chain" id="PRO_0000197096" description="Pre-mRNA-splicing factor CEF1">
    <location>
        <begin position="1"/>
        <end position="610"/>
    </location>
</feature>
<feature type="domain" description="HTH myb-type 1" evidence="3">
    <location>
        <begin position="1"/>
        <end position="55"/>
    </location>
</feature>
<feature type="domain" description="HTH myb-type 2" evidence="3">
    <location>
        <begin position="56"/>
        <end position="109"/>
    </location>
</feature>
<feature type="DNA-binding region" description="H-T-H motif" evidence="3">
    <location>
        <begin position="32"/>
        <end position="55"/>
    </location>
</feature>
<feature type="DNA-binding region" description="H-T-H motif" evidence="3">
    <location>
        <begin position="83"/>
        <end position="105"/>
    </location>
</feature>
<feature type="region of interest" description="Disordered" evidence="4">
    <location>
        <begin position="142"/>
        <end position="161"/>
    </location>
</feature>
<feature type="region of interest" description="Disordered" evidence="4">
    <location>
        <begin position="308"/>
        <end position="329"/>
    </location>
</feature>
<feature type="coiled-coil region" evidence="2">
    <location>
        <begin position="162"/>
        <end position="206"/>
    </location>
</feature>
<feature type="coiled-coil region" evidence="2">
    <location>
        <begin position="337"/>
        <end position="368"/>
    </location>
</feature>
<feature type="coiled-coil region" evidence="2">
    <location>
        <begin position="585"/>
        <end position="610"/>
    </location>
</feature>
<name>CEF1_CANAL</name>
<gene>
    <name type="primary">CEF1</name>
    <name type="ordered locus">CAALFM_C109370WA</name>
    <name type="ORF">CaO19.12262</name>
    <name type="ORF">CaO19.4799</name>
</gene>
<organism>
    <name type="scientific">Candida albicans (strain SC5314 / ATCC MYA-2876)</name>
    <name type="common">Yeast</name>
    <dbReference type="NCBI Taxonomy" id="237561"/>
    <lineage>
        <taxon>Eukaryota</taxon>
        <taxon>Fungi</taxon>
        <taxon>Dikarya</taxon>
        <taxon>Ascomycota</taxon>
        <taxon>Saccharomycotina</taxon>
        <taxon>Pichiomycetes</taxon>
        <taxon>Debaryomycetaceae</taxon>
        <taxon>Candida/Lodderomyces clade</taxon>
        <taxon>Candida</taxon>
    </lineage>
</organism>
<sequence>MAPPLYVKGGVWTNVEDEILKAAIQKYGIYQWERISSLLPKKSAKQVKARWVEYLSPLLNKTDWTKEEDEKLLNLHKIFPNQWRSISNILNRTAVQCVERYQKLIDEAAGIKPGDDEENLGLSGPGIETLPAVGASSGLAVGEMNLNPESKPARPDDEDLPDDEREMLAEAKARLGNIQGKKAKRKARERMLEESKRIALLQKRRELKSAGINVKLTTRNKKKRKEFDYNADIPHEIIPQAGPYDTAEELKQNDFEKQQFGQQVSTKGISMKDIDDRIAKEESRRKKEIEKKKLERKREFNAAASLISEHEDSKRRKLNLPEPGTHNFEKTKSDVLTLTNQANNKLSEKEIARNQNKKRAAVAQLIKATFERLPPPKHETGEILPFVSTNILEFRNDVNANDISDIAGAKLPDETATNVSTLISRVVQRELPIPHPNNLRDLSTVKFDTLVDKLIAEECHRLIRSDYKQYHDTTINGVSTDKYDRDLLEKINQDIDKEFAQMDVSTVHSFEDYVLPKNFKVAESIIENLHTFHNENEKLTNKILESTNYEDQRDQKLQQLTHLWRELSDVNLSYSIEKKLFELESSAIDKELLRLRSEIDKLNKKIETLR</sequence>
<reference key="1">
    <citation type="journal article" date="2004" name="Proc. Natl. Acad. Sci. U.S.A.">
        <title>The diploid genome sequence of Candida albicans.</title>
        <authorList>
            <person name="Jones T."/>
            <person name="Federspiel N.A."/>
            <person name="Chibana H."/>
            <person name="Dungan J."/>
            <person name="Kalman S."/>
            <person name="Magee B.B."/>
            <person name="Newport G."/>
            <person name="Thorstenson Y.R."/>
            <person name="Agabian N."/>
            <person name="Magee P.T."/>
            <person name="Davis R.W."/>
            <person name="Scherer S."/>
        </authorList>
    </citation>
    <scope>NUCLEOTIDE SEQUENCE [LARGE SCALE GENOMIC DNA]</scope>
    <source>
        <strain>SC5314 / ATCC MYA-2876</strain>
    </source>
</reference>
<reference key="2">
    <citation type="journal article" date="2007" name="Genome Biol.">
        <title>Assembly of the Candida albicans genome into sixteen supercontigs aligned on the eight chromosomes.</title>
        <authorList>
            <person name="van het Hoog M."/>
            <person name="Rast T.J."/>
            <person name="Martchenko M."/>
            <person name="Grindle S."/>
            <person name="Dignard D."/>
            <person name="Hogues H."/>
            <person name="Cuomo C."/>
            <person name="Berriman M."/>
            <person name="Scherer S."/>
            <person name="Magee B.B."/>
            <person name="Whiteway M."/>
            <person name="Chibana H."/>
            <person name="Nantel A."/>
            <person name="Magee P.T."/>
        </authorList>
    </citation>
    <scope>GENOME REANNOTATION</scope>
    <source>
        <strain>SC5314 / ATCC MYA-2876</strain>
    </source>
</reference>
<reference key="3">
    <citation type="journal article" date="2013" name="Genome Biol.">
        <title>Assembly of a phased diploid Candida albicans genome facilitates allele-specific measurements and provides a simple model for repeat and indel structure.</title>
        <authorList>
            <person name="Muzzey D."/>
            <person name="Schwartz K."/>
            <person name="Weissman J.S."/>
            <person name="Sherlock G."/>
        </authorList>
    </citation>
    <scope>NUCLEOTIDE SEQUENCE [LARGE SCALE GENOMIC DNA]</scope>
    <scope>GENOME REANNOTATION</scope>
    <source>
        <strain>SC5314 / ATCC MYA-2876</strain>
    </source>
</reference>
<accession>Q5APG6</accession>
<accession>A0A1D8PEK2</accession>